<sequence>MPTVAYTRGGAEYTPVYLMKIDEQKCIGCGRCFKVCGRDVMSLHGLTEDGQVVAPGTDEWDEVEDEIVKKVMALTGAENCIGCGACARVCPSECQTHAALS</sequence>
<name>FER3_RHOCA</name>
<comment type="function">
    <text>Ferredoxins are iron-sulfur proteins that transfer electrons in a wide variety of metabolic reactions.</text>
</comment>
<comment type="cofactor">
    <cofactor>
        <name>[4Fe-4S] cluster</name>
        <dbReference type="ChEBI" id="CHEBI:49883"/>
    </cofactor>
    <text>Binds 2 [4Fe-4S] clusters.</text>
</comment>
<comment type="subunit">
    <text>Homodimer.</text>
</comment>
<comment type="sequence caution" evidence="3">
    <conflict type="erroneous initiation">
        <sequence resource="EMBL-CDS" id="AAA26146"/>
    </conflict>
</comment>
<organism>
    <name type="scientific">Rhodobacter capsulatus</name>
    <name type="common">Rhodopseudomonas capsulata</name>
    <dbReference type="NCBI Taxonomy" id="1061"/>
    <lineage>
        <taxon>Bacteria</taxon>
        <taxon>Pseudomonadati</taxon>
        <taxon>Pseudomonadota</taxon>
        <taxon>Alphaproteobacteria</taxon>
        <taxon>Rhodobacterales</taxon>
        <taxon>Rhodobacter group</taxon>
        <taxon>Rhodobacter</taxon>
    </lineage>
</organism>
<gene>
    <name type="primary">fdxB</name>
</gene>
<reference key="1">
    <citation type="journal article" date="1989" name="J. Bacteriol.">
        <title>Open reading frame 5 (ORF5), encoding a ferredoxinlike protein, and nifQ are cotranscribed with nifE, nifN, nifX, and ORF4 in Rhodobacter capsulatus.</title>
        <authorList>
            <person name="Moreno-Vivian C."/>
            <person name="Hennecke S."/>
            <person name="Puehler A."/>
            <person name="Klipp W."/>
        </authorList>
    </citation>
    <scope>NUCLEOTIDE SEQUENCE [GENOMIC DNA]</scope>
</reference>
<reference key="2">
    <citation type="journal article" date="1993" name="J. Biol. Chem.">
        <title>Purification and characterization of a novel dimeric ferredoxin (FdIII) from Rhodobacter capsulatus.</title>
        <authorList>
            <person name="Jouanneau Y."/>
            <person name="Meyer C."/>
            <person name="Gaillard J."/>
            <person name="Forest E."/>
            <person name="Gagnon J."/>
        </authorList>
    </citation>
    <scope>PARTIAL PROTEIN SEQUENCE</scope>
    <scope>CHARACTERIZATION</scope>
</reference>
<protein>
    <recommendedName>
        <fullName>Ferredoxin-3</fullName>
    </recommendedName>
    <alternativeName>
        <fullName>Ferredoxin III</fullName>
        <shortName>FdIII</shortName>
    </alternativeName>
</protein>
<proteinExistence type="evidence at protein level"/>
<evidence type="ECO:0000250" key="1"/>
<evidence type="ECO:0000255" key="2">
    <source>
        <dbReference type="PROSITE-ProRule" id="PRU00711"/>
    </source>
</evidence>
<evidence type="ECO:0000305" key="3"/>
<dbReference type="EMBL" id="M26323">
    <property type="protein sequence ID" value="AAA26146.1"/>
    <property type="status" value="ALT_INIT"/>
    <property type="molecule type" value="Genomic_DNA"/>
</dbReference>
<dbReference type="PIR" id="B32308">
    <property type="entry name" value="FERF3C"/>
</dbReference>
<dbReference type="RefSeq" id="WP_023923722.1">
    <property type="nucleotide sequence ID" value="NZ_VIBE01000016.1"/>
</dbReference>
<dbReference type="GeneID" id="31492055"/>
<dbReference type="OMA" id="CFKVCGR"/>
<dbReference type="GO" id="GO:0051539">
    <property type="term" value="F:4 iron, 4 sulfur cluster binding"/>
    <property type="evidence" value="ECO:0007669"/>
    <property type="project" value="UniProtKB-KW"/>
</dbReference>
<dbReference type="GO" id="GO:0046872">
    <property type="term" value="F:metal ion binding"/>
    <property type="evidence" value="ECO:0007669"/>
    <property type="project" value="UniProtKB-KW"/>
</dbReference>
<dbReference type="GO" id="GO:0009399">
    <property type="term" value="P:nitrogen fixation"/>
    <property type="evidence" value="ECO:0007669"/>
    <property type="project" value="UniProtKB-KW"/>
</dbReference>
<dbReference type="Gene3D" id="3.30.70.20">
    <property type="match status" value="1"/>
</dbReference>
<dbReference type="InterPro" id="IPR017896">
    <property type="entry name" value="4Fe4S_Fe-S-bd"/>
</dbReference>
<dbReference type="InterPro" id="IPR017900">
    <property type="entry name" value="4Fe4S_Fe_S_CS"/>
</dbReference>
<dbReference type="InterPro" id="IPR014283">
    <property type="entry name" value="FdIII_4_nif"/>
</dbReference>
<dbReference type="InterPro" id="IPR050572">
    <property type="entry name" value="Fe-S_Ferredoxin"/>
</dbReference>
<dbReference type="NCBIfam" id="TIGR02936">
    <property type="entry name" value="fdxN_nitrog"/>
    <property type="match status" value="1"/>
</dbReference>
<dbReference type="PANTHER" id="PTHR43687">
    <property type="entry name" value="ADENYLYLSULFATE REDUCTASE, BETA SUBUNIT"/>
    <property type="match status" value="1"/>
</dbReference>
<dbReference type="PANTHER" id="PTHR43687:SF1">
    <property type="entry name" value="FERREDOXIN III"/>
    <property type="match status" value="1"/>
</dbReference>
<dbReference type="Pfam" id="PF13237">
    <property type="entry name" value="Fer4_10"/>
    <property type="match status" value="1"/>
</dbReference>
<dbReference type="SUPFAM" id="SSF46548">
    <property type="entry name" value="alpha-helical ferredoxin"/>
    <property type="match status" value="1"/>
</dbReference>
<dbReference type="PROSITE" id="PS00198">
    <property type="entry name" value="4FE4S_FER_1"/>
    <property type="match status" value="2"/>
</dbReference>
<dbReference type="PROSITE" id="PS51379">
    <property type="entry name" value="4FE4S_FER_2"/>
    <property type="match status" value="2"/>
</dbReference>
<keyword id="KW-0004">4Fe-4S</keyword>
<keyword id="KW-0903">Direct protein sequencing</keyword>
<keyword id="KW-0249">Electron transport</keyword>
<keyword id="KW-0408">Iron</keyword>
<keyword id="KW-0411">Iron-sulfur</keyword>
<keyword id="KW-0479">Metal-binding</keyword>
<keyword id="KW-0535">Nitrogen fixation</keyword>
<keyword id="KW-0677">Repeat</keyword>
<keyword id="KW-0813">Transport</keyword>
<feature type="initiator methionine" description="Removed">
    <location>
        <position position="1"/>
    </location>
</feature>
<feature type="chain" id="PRO_0000159189" description="Ferredoxin-3">
    <location>
        <begin position="2"/>
        <end position="101"/>
    </location>
</feature>
<feature type="domain" description="4Fe-4S ferredoxin-type 1" evidence="2">
    <location>
        <begin position="17"/>
        <end position="46"/>
    </location>
</feature>
<feature type="domain" description="4Fe-4S ferredoxin-type 2" evidence="2">
    <location>
        <begin position="70"/>
        <end position="100"/>
    </location>
</feature>
<feature type="binding site" evidence="1">
    <location>
        <position position="26"/>
    </location>
    <ligand>
        <name>[4Fe-4S] cluster</name>
        <dbReference type="ChEBI" id="CHEBI:49883"/>
        <label>1</label>
    </ligand>
</feature>
<feature type="binding site" evidence="1">
    <location>
        <position position="29"/>
    </location>
    <ligand>
        <name>[4Fe-4S] cluster</name>
        <dbReference type="ChEBI" id="CHEBI:49883"/>
        <label>1</label>
    </ligand>
</feature>
<feature type="binding site" evidence="1">
    <location>
        <position position="32"/>
    </location>
    <ligand>
        <name>[4Fe-4S] cluster</name>
        <dbReference type="ChEBI" id="CHEBI:49883"/>
        <label>1</label>
    </ligand>
</feature>
<feature type="binding site" evidence="1">
    <location>
        <position position="36"/>
    </location>
    <ligand>
        <name>[4Fe-4S] cluster</name>
        <dbReference type="ChEBI" id="CHEBI:49883"/>
        <label>1</label>
    </ligand>
</feature>
<feature type="binding site" evidence="1">
    <location>
        <position position="80"/>
    </location>
    <ligand>
        <name>[4Fe-4S] cluster</name>
        <dbReference type="ChEBI" id="CHEBI:49883"/>
        <label>2</label>
    </ligand>
</feature>
<feature type="binding site" evidence="1">
    <location>
        <position position="83"/>
    </location>
    <ligand>
        <name>[4Fe-4S] cluster</name>
        <dbReference type="ChEBI" id="CHEBI:49883"/>
        <label>2</label>
    </ligand>
</feature>
<feature type="binding site" evidence="1">
    <location>
        <position position="86"/>
    </location>
    <ligand>
        <name>[4Fe-4S] cluster</name>
        <dbReference type="ChEBI" id="CHEBI:49883"/>
        <label>2</label>
    </ligand>
</feature>
<feature type="binding site" evidence="1">
    <location>
        <position position="90"/>
    </location>
    <ligand>
        <name>[4Fe-4S] cluster</name>
        <dbReference type="ChEBI" id="CHEBI:49883"/>
        <label>2</label>
    </ligand>
</feature>
<accession>P20624</accession>